<evidence type="ECO:0000250" key="1">
    <source>
        <dbReference type="UniProtKB" id="P28069"/>
    </source>
</evidence>
<evidence type="ECO:0000255" key="2">
    <source>
        <dbReference type="PROSITE-ProRule" id="PRU00108"/>
    </source>
</evidence>
<evidence type="ECO:0000255" key="3">
    <source>
        <dbReference type="PROSITE-ProRule" id="PRU00530"/>
    </source>
</evidence>
<evidence type="ECO:0000303" key="4">
    <source ref="1"/>
</evidence>
<evidence type="ECO:0000305" key="5"/>
<comment type="function">
    <text evidence="1">Transcription factor that activates growth hormone and prolactin genes. Specifically binds to the consensus sequence 5'-TAAAT-3'.</text>
</comment>
<comment type="subcellular location">
    <subcellularLocation>
        <location evidence="1">Nucleus</location>
    </subcellularLocation>
</comment>
<comment type="alternative products">
    <event type="alternative splicing"/>
    <isoform>
        <id>Q9YGL7-1</id>
        <name>PIT-1beta*</name>
        <sequence type="displayed"/>
    </isoform>
    <isoform>
        <id>Q9YGL7-3</id>
        <name>PIT-1</name>
        <sequence type="not described"/>
    </isoform>
    <isoform>
        <id>Q9YGL7-2</id>
        <name>PIT-1*</name>
        <sequence type="described" ref="VSP_002317"/>
    </isoform>
</comment>
<comment type="tissue specificity">
    <text>Pituitary gland.</text>
</comment>
<comment type="domain">
    <text evidence="1">The 9aaTAD motif is a transactivation domain present in a large number of yeast and animal transcription factors.</text>
</comment>
<comment type="similarity">
    <text evidence="5">Belongs to the POU transcription factor family. Class-1 subfamily.</text>
</comment>
<name>PIT1_CHICK</name>
<feature type="chain" id="PRO_0000100703" description="Pituitary-specific positive transcription factor 1">
    <location>
        <begin position="1"/>
        <end position="363"/>
    </location>
</feature>
<feature type="domain" description="POU-specific" evidence="3">
    <location>
        <begin position="195"/>
        <end position="269"/>
    </location>
</feature>
<feature type="DNA-binding region" description="Homeobox" evidence="2">
    <location>
        <begin position="285"/>
        <end position="344"/>
    </location>
</feature>
<feature type="short sequence motif" description="9aaTAD" evidence="1">
    <location>
        <begin position="5"/>
        <end position="13"/>
    </location>
</feature>
<feature type="splice variant" id="VSP_002317" description="In isoform PIT-1*." evidence="4">
    <location>
        <begin position="48"/>
        <end position="75"/>
    </location>
</feature>
<sequence>MTCQAFASSDNFVPLNSDSSPSLPLIMHHSAGECLPVSNHATNVVSTVPSVLSLIQTPKCSHFHFAMMTSGNVSAGLHYSVPSCHYGNQASTYGVMAGIKPATPEMLSASLSQSRILQTCSMPHPNVVNGVSTLQSSLTPCLYKFPEHALSASSCALGHSFTPMHQTLLSDDPTASDFKQEFRRKSKSVEEPVDMDSPEIRELEKFANEFKLRRIKLGYTQTNVGEALAAVHGSEFSQTTICRFENLQLSFKNACKLKSILSKWLEEAEQVGALYNEKVGVNERKRKRRTTISISAKEALERHFGEQSKPSSQEIMRMAEGLNLEKEVVRVWFCNRRQREKRVKTSLHQNAFSSIIKEHHECR</sequence>
<dbReference type="EMBL" id="AJ236856">
    <property type="protein sequence ID" value="CAB37357.1"/>
    <property type="molecule type" value="mRNA"/>
</dbReference>
<dbReference type="EMBL" id="AJ236855">
    <property type="protein sequence ID" value="CAB37356.1"/>
    <property type="molecule type" value="mRNA"/>
</dbReference>
<dbReference type="RefSeq" id="NP_001383032.1">
    <molecule id="Q9YGL7-2"/>
    <property type="nucleotide sequence ID" value="NM_001396103.1"/>
</dbReference>
<dbReference type="SMR" id="Q9YGL7"/>
<dbReference type="FunCoup" id="Q9YGL7">
    <property type="interactions" value="55"/>
</dbReference>
<dbReference type="STRING" id="9031.ENSGALP00000045301"/>
<dbReference type="PaxDb" id="9031-ENSGALP00000036048"/>
<dbReference type="VEuPathDB" id="HostDB:geneid_374215"/>
<dbReference type="eggNOG" id="KOG3802">
    <property type="taxonomic scope" value="Eukaryota"/>
</dbReference>
<dbReference type="InParanoid" id="Q9YGL7"/>
<dbReference type="OrthoDB" id="6358449at2759"/>
<dbReference type="PhylomeDB" id="Q9YGL7"/>
<dbReference type="Proteomes" id="UP000000539">
    <property type="component" value="Unassembled WGS sequence"/>
</dbReference>
<dbReference type="GO" id="GO:0005634">
    <property type="term" value="C:nucleus"/>
    <property type="evidence" value="ECO:0000250"/>
    <property type="project" value="UniProtKB"/>
</dbReference>
<dbReference type="GO" id="GO:0000981">
    <property type="term" value="F:DNA-binding transcription factor activity, RNA polymerase II-specific"/>
    <property type="evidence" value="ECO:0000250"/>
    <property type="project" value="UniProtKB"/>
</dbReference>
<dbReference type="GO" id="GO:0000978">
    <property type="term" value="F:RNA polymerase II cis-regulatory region sequence-specific DNA binding"/>
    <property type="evidence" value="ECO:0000318"/>
    <property type="project" value="GO_Central"/>
</dbReference>
<dbReference type="GO" id="GO:0045944">
    <property type="term" value="P:positive regulation of transcription by RNA polymerase II"/>
    <property type="evidence" value="ECO:0000250"/>
    <property type="project" value="UniProtKB"/>
</dbReference>
<dbReference type="GO" id="GO:0006357">
    <property type="term" value="P:regulation of transcription by RNA polymerase II"/>
    <property type="evidence" value="ECO:0000318"/>
    <property type="project" value="GO_Central"/>
</dbReference>
<dbReference type="CDD" id="cd00086">
    <property type="entry name" value="homeodomain"/>
    <property type="match status" value="1"/>
</dbReference>
<dbReference type="FunFam" id="1.10.10.60:FF:000150">
    <property type="entry name" value="POU domain protein"/>
    <property type="match status" value="1"/>
</dbReference>
<dbReference type="FunFam" id="1.10.260.40:FF:000007">
    <property type="entry name" value="POU domain protein"/>
    <property type="match status" value="1"/>
</dbReference>
<dbReference type="Gene3D" id="1.10.10.60">
    <property type="entry name" value="Homeodomain-like"/>
    <property type="match status" value="1"/>
</dbReference>
<dbReference type="Gene3D" id="1.10.260.40">
    <property type="entry name" value="lambda repressor-like DNA-binding domains"/>
    <property type="match status" value="1"/>
</dbReference>
<dbReference type="InterPro" id="IPR001356">
    <property type="entry name" value="HD"/>
</dbReference>
<dbReference type="InterPro" id="IPR017970">
    <property type="entry name" value="Homeobox_CS"/>
</dbReference>
<dbReference type="InterPro" id="IPR009057">
    <property type="entry name" value="Homeodomain-like_sf"/>
</dbReference>
<dbReference type="InterPro" id="IPR010982">
    <property type="entry name" value="Lambda_DNA-bd_dom_sf"/>
</dbReference>
<dbReference type="InterPro" id="IPR013847">
    <property type="entry name" value="POU"/>
</dbReference>
<dbReference type="InterPro" id="IPR000327">
    <property type="entry name" value="POU_dom"/>
</dbReference>
<dbReference type="InterPro" id="IPR050255">
    <property type="entry name" value="POU_domain_TF"/>
</dbReference>
<dbReference type="PANTHER" id="PTHR11636:SF84">
    <property type="entry name" value="NETRIN-1-RELATED"/>
    <property type="match status" value="1"/>
</dbReference>
<dbReference type="PANTHER" id="PTHR11636">
    <property type="entry name" value="POU DOMAIN"/>
    <property type="match status" value="1"/>
</dbReference>
<dbReference type="Pfam" id="PF00046">
    <property type="entry name" value="Homeodomain"/>
    <property type="match status" value="1"/>
</dbReference>
<dbReference type="Pfam" id="PF00157">
    <property type="entry name" value="Pou"/>
    <property type="match status" value="1"/>
</dbReference>
<dbReference type="PRINTS" id="PR00028">
    <property type="entry name" value="POUDOMAIN"/>
</dbReference>
<dbReference type="SMART" id="SM00389">
    <property type="entry name" value="HOX"/>
    <property type="match status" value="1"/>
</dbReference>
<dbReference type="SMART" id="SM00352">
    <property type="entry name" value="POU"/>
    <property type="match status" value="1"/>
</dbReference>
<dbReference type="SUPFAM" id="SSF46689">
    <property type="entry name" value="Homeodomain-like"/>
    <property type="match status" value="1"/>
</dbReference>
<dbReference type="SUPFAM" id="SSF47413">
    <property type="entry name" value="lambda repressor-like DNA-binding domains"/>
    <property type="match status" value="1"/>
</dbReference>
<dbReference type="PROSITE" id="PS00027">
    <property type="entry name" value="HOMEOBOX_1"/>
    <property type="match status" value="1"/>
</dbReference>
<dbReference type="PROSITE" id="PS50071">
    <property type="entry name" value="HOMEOBOX_2"/>
    <property type="match status" value="1"/>
</dbReference>
<dbReference type="PROSITE" id="PS00035">
    <property type="entry name" value="POU_1"/>
    <property type="match status" value="1"/>
</dbReference>
<dbReference type="PROSITE" id="PS00465">
    <property type="entry name" value="POU_2"/>
    <property type="match status" value="1"/>
</dbReference>
<dbReference type="PROSITE" id="PS51179">
    <property type="entry name" value="POU_3"/>
    <property type="match status" value="1"/>
</dbReference>
<proteinExistence type="evidence at transcript level"/>
<accession>Q9YGL7</accession>
<accession>Q9YGL8</accession>
<reference key="1">
    <citation type="submission" date="1999-02" db="EMBL/GenBank/DDBJ databases">
        <title>Complementary DNA cloning of pituitary specific transcription factor (Pit-1) from chicken.</title>
        <authorList>
            <person name="van As P."/>
            <person name="Buys N."/>
            <person name="Volckaert G."/>
            <person name="Decuypere E."/>
        </authorList>
    </citation>
    <scope>NUCLEOTIDE SEQUENCE [MRNA] (ISOFORMS PIT-1* AND PIT-1BETA*)</scope>
    <source>
        <strain>Ross</strain>
        <tissue>Pituitary</tissue>
    </source>
</reference>
<gene>
    <name type="primary">POU1F1</name>
    <name type="synonym">PIT1</name>
</gene>
<organism>
    <name type="scientific">Gallus gallus</name>
    <name type="common">Chicken</name>
    <dbReference type="NCBI Taxonomy" id="9031"/>
    <lineage>
        <taxon>Eukaryota</taxon>
        <taxon>Metazoa</taxon>
        <taxon>Chordata</taxon>
        <taxon>Craniata</taxon>
        <taxon>Vertebrata</taxon>
        <taxon>Euteleostomi</taxon>
        <taxon>Archelosauria</taxon>
        <taxon>Archosauria</taxon>
        <taxon>Dinosauria</taxon>
        <taxon>Saurischia</taxon>
        <taxon>Theropoda</taxon>
        <taxon>Coelurosauria</taxon>
        <taxon>Aves</taxon>
        <taxon>Neognathae</taxon>
        <taxon>Galloanserae</taxon>
        <taxon>Galliformes</taxon>
        <taxon>Phasianidae</taxon>
        <taxon>Phasianinae</taxon>
        <taxon>Gallus</taxon>
    </lineage>
</organism>
<protein>
    <recommendedName>
        <fullName>Pituitary-specific positive transcription factor 1</fullName>
        <shortName>PIT-1</shortName>
    </recommendedName>
    <alternativeName>
        <fullName>Growth hormone factor 1</fullName>
        <shortName>GHF-1</shortName>
    </alternativeName>
</protein>
<keyword id="KW-0010">Activator</keyword>
<keyword id="KW-0025">Alternative splicing</keyword>
<keyword id="KW-0238">DNA-binding</keyword>
<keyword id="KW-0371">Homeobox</keyword>
<keyword id="KW-0539">Nucleus</keyword>
<keyword id="KW-1185">Reference proteome</keyword>
<keyword id="KW-0804">Transcription</keyword>
<keyword id="KW-0805">Transcription regulation</keyword>